<evidence type="ECO:0000255" key="1">
    <source>
        <dbReference type="PROSITE-ProRule" id="PRU00433"/>
    </source>
</evidence>
<evidence type="ECO:0000269" key="2">
    <source>
    </source>
</evidence>
<evidence type="ECO:0000269" key="3">
    <source>
    </source>
</evidence>
<evidence type="ECO:0000269" key="4">
    <source>
    </source>
</evidence>
<evidence type="ECO:0000269" key="5">
    <source>
    </source>
</evidence>
<evidence type="ECO:0000269" key="6">
    <source>
    </source>
</evidence>
<evidence type="ECO:0000269" key="7">
    <source>
    </source>
</evidence>
<evidence type="ECO:0000269" key="8">
    <source>
    </source>
</evidence>
<evidence type="ECO:0000269" key="9">
    <source>
    </source>
</evidence>
<evidence type="ECO:0000303" key="10">
    <source>
    </source>
</evidence>
<evidence type="ECO:0000305" key="11"/>
<evidence type="ECO:0000305" key="12">
    <source>
    </source>
</evidence>
<evidence type="ECO:0007744" key="13">
    <source>
        <dbReference type="PDB" id="1KV9"/>
    </source>
</evidence>
<evidence type="ECO:0007829" key="14">
    <source>
        <dbReference type="PDB" id="1KV9"/>
    </source>
</evidence>
<sequence>MKKPLRTSLLMLCLATPLAALAAGVDEAAIRATEQAGGEWLSHGRTYAEQRFSPLKQIDASNVRSLGLAWYMDLDNTRGLEATPLFHDGVIYTSMSWSRVIAVDAASGKELWRYDPEVAKVKARTSCCDAVNRGVALWGDKVYVGTLDGRLIALDAKTGKAIWSQQTTDPAKPYSITGAPRVVKGKVIIGNGGAEYGVRGFVSAYDADTGKLAWRFYTVPGDPALPYEHPELREAAKTWQGDQYWKLGGGGTVWDSMAYDPELDLLYVGTGNGSPWNREVRSPGGGDNLYLSSILAIRPDTGKLAWHYQVTPGDSWDFTATQQITLAELNIDGKPRKVLMQAPKNGFFYVLDRTNGKLISAEKFGKVTWAEKVDLATGRPVEAPGVRYEKEPIVMWPSPFGAHNWHSMSFNPGTGLVYIPYQEVPGVYRNEGKDFVTRKAFNTAAGFADATDVPAAVVSGALLAWDPVKQKAAWKVPYPTHWNGGTLSTAGNLVFQGTAAGQMHAYSADKGEALWQFEAQSGIVAAPMTFELAGRQYVAIMAGWGGVATLTGGESMNLPGMKNRSRLLVFALDGKAQLPPPAPAPAKVERVPQPVTAAPEQVQAGKQLYGQFCSVCHGMGTISGGLIPDLRQSSDATREHFQQIVLQGALKPLGMPSFDDSLKPEEVEQIKLYVMSREYEDYMARHKAAP</sequence>
<protein>
    <recommendedName>
        <fullName evidence="10">Quinohemoprotein alcohol dehydrogenase ADH IIB</fullName>
        <shortName evidence="10">ADH IIB</shortName>
        <ecNumber evidence="2 6 9">1.1.9.1</ecNumber>
    </recommendedName>
    <alternativeName>
        <fullName evidence="11">Alcohol dehydrogenase (azurin)</fullName>
    </alternativeName>
</protein>
<accession>Q8GR64</accession>
<feature type="signal peptide" evidence="4 5">
    <location>
        <begin position="1"/>
        <end position="22"/>
    </location>
</feature>
<feature type="chain" id="PRO_0000419525" description="Quinohemoprotein alcohol dehydrogenase ADH IIB" evidence="9">
    <location>
        <begin position="23"/>
        <end position="690"/>
    </location>
</feature>
<feature type="domain" description="Cytochrome c" evidence="1">
    <location>
        <begin position="600"/>
        <end position="678"/>
    </location>
</feature>
<feature type="active site" description="Proton acceptor" evidence="12">
    <location>
        <position position="317"/>
    </location>
</feature>
<feature type="binding site" evidence="4 13">
    <location>
        <position position="81"/>
    </location>
    <ligand>
        <name>pyrroloquinoline quinone</name>
        <dbReference type="ChEBI" id="CHEBI:58442"/>
    </ligand>
</feature>
<feature type="binding site" evidence="4 13">
    <location>
        <position position="133"/>
    </location>
    <ligand>
        <name>pyrroloquinoline quinone</name>
        <dbReference type="ChEBI" id="CHEBI:58442"/>
    </ligand>
</feature>
<feature type="binding site" evidence="4 13">
    <location>
        <position position="177"/>
    </location>
    <ligand>
        <name>pyrroloquinoline quinone</name>
        <dbReference type="ChEBI" id="CHEBI:58442"/>
    </ligand>
</feature>
<feature type="binding site" evidence="4 13">
    <location>
        <begin position="193"/>
        <end position="194"/>
    </location>
    <ligand>
        <name>pyrroloquinoline quinone</name>
        <dbReference type="ChEBI" id="CHEBI:58442"/>
    </ligand>
</feature>
<feature type="binding site" evidence="4 13">
    <location>
        <position position="195"/>
    </location>
    <ligand>
        <name>Ca(2+)</name>
        <dbReference type="ChEBI" id="CHEBI:29108"/>
    </ligand>
</feature>
<feature type="binding site" evidence="4 13">
    <location>
        <position position="252"/>
    </location>
    <ligand>
        <name>pyrroloquinoline quinone</name>
        <dbReference type="ChEBI" id="CHEBI:58442"/>
    </ligand>
</feature>
<feature type="binding site" evidence="4 13">
    <location>
        <position position="272"/>
    </location>
    <ligand>
        <name>Ca(2+)</name>
        <dbReference type="ChEBI" id="CHEBI:29108"/>
    </ligand>
</feature>
<feature type="binding site" evidence="4 13">
    <location>
        <position position="317"/>
    </location>
    <ligand>
        <name>Ca(2+)</name>
        <dbReference type="ChEBI" id="CHEBI:29108"/>
    </ligand>
</feature>
<feature type="binding site" evidence="4 13">
    <location>
        <position position="344"/>
    </location>
    <ligand>
        <name>pyrroloquinoline quinone</name>
        <dbReference type="ChEBI" id="CHEBI:58442"/>
    </ligand>
</feature>
<feature type="binding site" evidence="4 13">
    <location>
        <begin position="404"/>
        <end position="405"/>
    </location>
    <ligand>
        <name>pyrroloquinoline quinone</name>
        <dbReference type="ChEBI" id="CHEBI:58442"/>
    </ligand>
</feature>
<feature type="binding site" evidence="4 13">
    <location>
        <position position="547"/>
    </location>
    <ligand>
        <name>pyrroloquinoline quinone</name>
        <dbReference type="ChEBI" id="CHEBI:58442"/>
    </ligand>
</feature>
<feature type="binding site" description="covalent" evidence="4 13">
    <location>
        <position position="613"/>
    </location>
    <ligand>
        <name>heme c</name>
        <dbReference type="ChEBI" id="CHEBI:61717"/>
    </ligand>
</feature>
<feature type="binding site" description="covalent" evidence="4 13">
    <location>
        <position position="616"/>
    </location>
    <ligand>
        <name>heme c</name>
        <dbReference type="ChEBI" id="CHEBI:61717"/>
    </ligand>
</feature>
<feature type="binding site" description="axial binding residue" evidence="4 13">
    <location>
        <position position="617"/>
    </location>
    <ligand>
        <name>heme c</name>
        <dbReference type="ChEBI" id="CHEBI:61717"/>
    </ligand>
    <ligandPart>
        <name>Fe</name>
        <dbReference type="ChEBI" id="CHEBI:18248"/>
    </ligandPart>
</feature>
<feature type="binding site" description="axial binding residue" evidence="4 13">
    <location>
        <position position="655"/>
    </location>
    <ligand>
        <name>heme c</name>
        <dbReference type="ChEBI" id="CHEBI:61717"/>
    </ligand>
    <ligandPart>
        <name>Fe</name>
        <dbReference type="ChEBI" id="CHEBI:18248"/>
    </ligandPart>
</feature>
<feature type="disulfide bond" evidence="4 13">
    <location>
        <begin position="127"/>
        <end position="128"/>
    </location>
</feature>
<feature type="helix" evidence="14">
    <location>
        <begin position="27"/>
        <end position="32"/>
    </location>
</feature>
<feature type="turn" evidence="14">
    <location>
        <begin position="33"/>
        <end position="35"/>
    </location>
</feature>
<feature type="turn" evidence="14">
    <location>
        <begin position="60"/>
        <end position="62"/>
    </location>
</feature>
<feature type="helix" evidence="14">
    <location>
        <begin position="63"/>
        <end position="65"/>
    </location>
</feature>
<feature type="strand" evidence="14">
    <location>
        <begin position="66"/>
        <end position="73"/>
    </location>
</feature>
<feature type="strand" evidence="14">
    <location>
        <begin position="85"/>
        <end position="87"/>
    </location>
</feature>
<feature type="strand" evidence="14">
    <location>
        <begin position="90"/>
        <end position="95"/>
    </location>
</feature>
<feature type="helix" evidence="14">
    <location>
        <begin position="96"/>
        <end position="98"/>
    </location>
</feature>
<feature type="strand" evidence="14">
    <location>
        <begin position="99"/>
        <end position="104"/>
    </location>
</feature>
<feature type="turn" evidence="14">
    <location>
        <begin position="105"/>
        <end position="107"/>
    </location>
</feature>
<feature type="strand" evidence="14">
    <location>
        <begin position="110"/>
        <end position="114"/>
    </location>
</feature>
<feature type="helix" evidence="14">
    <location>
        <begin position="120"/>
        <end position="125"/>
    </location>
</feature>
<feature type="strand" evidence="14">
    <location>
        <begin position="136"/>
        <end position="139"/>
    </location>
</feature>
<feature type="strand" evidence="14">
    <location>
        <begin position="141"/>
        <end position="145"/>
    </location>
</feature>
<feature type="strand" evidence="14">
    <location>
        <begin position="149"/>
        <end position="155"/>
    </location>
</feature>
<feature type="turn" evidence="14">
    <location>
        <begin position="156"/>
        <end position="158"/>
    </location>
</feature>
<feature type="strand" evidence="14">
    <location>
        <begin position="161"/>
        <end position="166"/>
    </location>
</feature>
<feature type="strand" evidence="14">
    <location>
        <begin position="181"/>
        <end position="183"/>
    </location>
</feature>
<feature type="strand" evidence="14">
    <location>
        <begin position="186"/>
        <end position="189"/>
    </location>
</feature>
<feature type="turn" evidence="14">
    <location>
        <begin position="194"/>
        <end position="196"/>
    </location>
</feature>
<feature type="strand" evidence="14">
    <location>
        <begin position="201"/>
        <end position="206"/>
    </location>
</feature>
<feature type="turn" evidence="14">
    <location>
        <begin position="207"/>
        <end position="209"/>
    </location>
</feature>
<feature type="strand" evidence="14">
    <location>
        <begin position="212"/>
        <end position="219"/>
    </location>
</feature>
<feature type="helix" evidence="14">
    <location>
        <begin position="230"/>
        <end position="236"/>
    </location>
</feature>
<feature type="helix" evidence="14">
    <location>
        <begin position="244"/>
        <end position="247"/>
    </location>
</feature>
<feature type="strand" evidence="14">
    <location>
        <begin position="257"/>
        <end position="260"/>
    </location>
</feature>
<feature type="turn" evidence="14">
    <location>
        <begin position="261"/>
        <end position="264"/>
    </location>
</feature>
<feature type="strand" evidence="14">
    <location>
        <begin position="265"/>
        <end position="269"/>
    </location>
</feature>
<feature type="strand" evidence="14">
    <location>
        <begin position="273"/>
        <end position="276"/>
    </location>
</feature>
<feature type="helix" evidence="14">
    <location>
        <begin position="278"/>
        <end position="281"/>
    </location>
</feature>
<feature type="turn" evidence="14">
    <location>
        <begin position="289"/>
        <end position="292"/>
    </location>
</feature>
<feature type="strand" evidence="14">
    <location>
        <begin position="293"/>
        <end position="297"/>
    </location>
</feature>
<feature type="turn" evidence="14">
    <location>
        <begin position="299"/>
        <end position="301"/>
    </location>
</feature>
<feature type="strand" evidence="14">
    <location>
        <begin position="304"/>
        <end position="311"/>
    </location>
</feature>
<feature type="strand" evidence="14">
    <location>
        <begin position="324"/>
        <end position="331"/>
    </location>
</feature>
<feature type="strand" evidence="14">
    <location>
        <begin position="334"/>
        <end position="341"/>
    </location>
</feature>
<feature type="strand" evidence="14">
    <location>
        <begin position="346"/>
        <end position="352"/>
    </location>
</feature>
<feature type="turn" evidence="14">
    <location>
        <begin position="353"/>
        <end position="355"/>
    </location>
</feature>
<feature type="strand" evidence="14">
    <location>
        <begin position="358"/>
        <end position="365"/>
    </location>
</feature>
<feature type="strand" evidence="14">
    <location>
        <begin position="369"/>
        <end position="373"/>
    </location>
</feature>
<feature type="turn" evidence="14">
    <location>
        <begin position="375"/>
        <end position="377"/>
    </location>
</feature>
<feature type="strand" evidence="14">
    <location>
        <begin position="380"/>
        <end position="382"/>
    </location>
</feature>
<feature type="turn" evidence="14">
    <location>
        <begin position="384"/>
        <end position="387"/>
    </location>
</feature>
<feature type="strand" evidence="14">
    <location>
        <begin position="389"/>
        <end position="391"/>
    </location>
</feature>
<feature type="strand" evidence="14">
    <location>
        <begin position="393"/>
        <end position="397"/>
    </location>
</feature>
<feature type="strand" evidence="14">
    <location>
        <begin position="409"/>
        <end position="411"/>
    </location>
</feature>
<feature type="turn" evidence="14">
    <location>
        <begin position="412"/>
        <end position="415"/>
    </location>
</feature>
<feature type="strand" evidence="14">
    <location>
        <begin position="416"/>
        <end position="423"/>
    </location>
</feature>
<feature type="strand" evidence="14">
    <location>
        <begin position="426"/>
        <end position="428"/>
    </location>
</feature>
<feature type="helix" evidence="14">
    <location>
        <begin position="432"/>
        <end position="434"/>
    </location>
</feature>
<feature type="helix" evidence="14">
    <location>
        <begin position="447"/>
        <end position="449"/>
    </location>
</feature>
<feature type="helix" evidence="14">
    <location>
        <begin position="455"/>
        <end position="457"/>
    </location>
</feature>
<feature type="strand" evidence="14">
    <location>
        <begin position="459"/>
        <end position="466"/>
    </location>
</feature>
<feature type="turn" evidence="14">
    <location>
        <begin position="467"/>
        <end position="470"/>
    </location>
</feature>
<feature type="strand" evidence="14">
    <location>
        <begin position="471"/>
        <end position="481"/>
    </location>
</feature>
<feature type="strand" evidence="14">
    <location>
        <begin position="486"/>
        <end position="489"/>
    </location>
</feature>
<feature type="turn" evidence="14">
    <location>
        <begin position="490"/>
        <end position="492"/>
    </location>
</feature>
<feature type="strand" evidence="14">
    <location>
        <begin position="493"/>
        <end position="497"/>
    </location>
</feature>
<feature type="strand" evidence="14">
    <location>
        <begin position="501"/>
        <end position="507"/>
    </location>
</feature>
<feature type="turn" evidence="14">
    <location>
        <begin position="508"/>
        <end position="510"/>
    </location>
</feature>
<feature type="strand" evidence="14">
    <location>
        <begin position="513"/>
        <end position="518"/>
    </location>
</feature>
<feature type="strand" evidence="14">
    <location>
        <begin position="528"/>
        <end position="532"/>
    </location>
</feature>
<feature type="strand" evidence="14">
    <location>
        <begin position="535"/>
        <end position="542"/>
    </location>
</feature>
<feature type="helix" evidence="14">
    <location>
        <begin position="547"/>
        <end position="551"/>
    </location>
</feature>
<feature type="helix" evidence="14">
    <location>
        <begin position="554"/>
        <end position="557"/>
    </location>
</feature>
<feature type="strand" evidence="14">
    <location>
        <begin position="566"/>
        <end position="572"/>
    </location>
</feature>
<feature type="helix" evidence="14">
    <location>
        <begin position="599"/>
        <end position="612"/>
    </location>
</feature>
<feature type="helix" evidence="14">
    <location>
        <begin position="614"/>
        <end position="617"/>
    </location>
</feature>
<feature type="helix" evidence="14">
    <location>
        <begin position="619"/>
        <end position="621"/>
    </location>
</feature>
<feature type="strand" evidence="14">
    <location>
        <begin position="625"/>
        <end position="627"/>
    </location>
</feature>
<feature type="helix" evidence="14">
    <location>
        <begin position="630"/>
        <end position="632"/>
    </location>
</feature>
<feature type="helix" evidence="14">
    <location>
        <begin position="635"/>
        <end position="639"/>
    </location>
</feature>
<feature type="helix" evidence="14">
    <location>
        <begin position="641"/>
        <end position="647"/>
    </location>
</feature>
<feature type="helix" evidence="14">
    <location>
        <begin position="651"/>
        <end position="653"/>
    </location>
</feature>
<feature type="turn" evidence="14">
    <location>
        <begin position="659"/>
        <end position="661"/>
    </location>
</feature>
<feature type="helix" evidence="14">
    <location>
        <begin position="664"/>
        <end position="684"/>
    </location>
</feature>
<organism>
    <name type="scientific">Pseudomonas putida</name>
    <name type="common">Arthrobacter siderocapsulatus</name>
    <dbReference type="NCBI Taxonomy" id="303"/>
    <lineage>
        <taxon>Bacteria</taxon>
        <taxon>Pseudomonadati</taxon>
        <taxon>Pseudomonadota</taxon>
        <taxon>Gammaproteobacteria</taxon>
        <taxon>Pseudomonadales</taxon>
        <taxon>Pseudomonadaceae</taxon>
        <taxon>Pseudomonas</taxon>
    </lineage>
</organism>
<reference key="1">
    <citation type="journal article" date="2003" name="Biosci. Biotechnol. Biochem.">
        <title>Molecular cloning of quinohemoprotein alcohol dehydrogenase, ADH IIB, from Pseudomonas putida HK5.</title>
        <authorList>
            <person name="Toyama H."/>
            <person name="Fujii T."/>
            <person name="Aoki N."/>
            <person name="Matsushita K."/>
            <person name="Adachi O."/>
        </authorList>
    </citation>
    <scope>NUCLEOTIDE SEQUENCE [GENOMIC DNA]</scope>
    <scope>PROTEIN SEQUENCE OF 23-36; 247-262 AND 388-396</scope>
    <scope>MASS SPECTROMETRY</scope>
    <source>
        <strain>HK5</strain>
    </source>
</reference>
<reference key="2">
    <citation type="journal article" date="1995" name="J. Bacteriol.">
        <title>Three distinct quinoprotein alcohol dehydrogenases are expressed when Pseudomonas putida is grown on different alcohols.</title>
        <authorList>
            <person name="Toyama H."/>
            <person name="Fujii A."/>
            <person name="Matsushita K."/>
            <person name="Shinagawa E."/>
            <person name="Ameyama M."/>
            <person name="Adachi O."/>
        </authorList>
    </citation>
    <scope>FUNCTION</scope>
    <scope>CATALYTIC ACTIVITY</scope>
    <scope>COFACTOR</scope>
    <scope>ACTIVITY REGULATION</scope>
    <scope>BIOPHYSICOCHEMICAL PROPERTIES</scope>
    <scope>SUBUNIT</scope>
    <scope>INDUCTION</scope>
    <source>
        <strain>HK5</strain>
    </source>
</reference>
<reference key="3">
    <citation type="journal article" date="1999" name="Biochemistry">
        <title>Electron transfer from quinohemoprotein alcohol dehydrogenase to blue copper protein azurin in the alcohol oxidase respiratory chain of Pseudomonas putida HK5.</title>
        <authorList>
            <person name="Matsushita K."/>
            <person name="Yamashita T."/>
            <person name="Aoki N."/>
            <person name="Toyama H."/>
            <person name="Adachi O."/>
        </authorList>
    </citation>
    <scope>FUNCTION</scope>
    <scope>CATALYTIC ACTIVITY</scope>
    <scope>BIOPHYSICOCHEMICAL PROPERTIES</scope>
    <source>
        <strain>HK5</strain>
    </source>
</reference>
<reference key="4">
    <citation type="journal article" date="2005" name="J. Mol. Biol.">
        <title>Molecular cloning and structural analysis of quinohemoprotein alcohol dehydrogenase ADH-IIG from Pseudomonas putida HK5.</title>
        <authorList>
            <person name="Toyama H."/>
            <person name="Chen Z.W."/>
            <person name="Fukumoto M."/>
            <person name="Adachi O."/>
            <person name="Matsushita K."/>
            <person name="Mathews F.S."/>
        </authorList>
    </citation>
    <scope>FUNCTION</scope>
    <scope>CATALYTIC ACTIVITY</scope>
    <scope>STEREOSPECIFICITY</scope>
    <scope>BIOPHYSICOCHEMICAL PROPERTIES</scope>
    <source>
        <strain>HK5</strain>
    </source>
</reference>
<reference key="5">
    <citation type="journal article" date="2008" name="FEMS Microbiol. Lett.">
        <title>Disruption of quinoprotein ethanol dehydrogenase gene and adjacent genes in Pseudomonas putida HK5.</title>
        <authorList>
            <person name="Promden W."/>
            <person name="Vangnai A.S."/>
            <person name="Pongsawasdi P."/>
            <person name="Adachi O."/>
            <person name="Matsushita K."/>
            <person name="Toyama H."/>
        </authorList>
    </citation>
    <scope>FUNCTION</scope>
    <scope>INDUCTION</scope>
    <source>
        <strain>HK5</strain>
    </source>
</reference>
<reference key="6">
    <citation type="journal article" date="2009" name="Microbiology">
        <title>Analysis of the promoter activities of the genes encoding three quinoprotein alcohol dehydrogenases in Pseudomonas putida HK5.</title>
        <authorList>
            <person name="Promden W."/>
            <person name="Vangnai A.S."/>
            <person name="Toyama H."/>
            <person name="Matsushita K."/>
            <person name="Pongsawasdi P."/>
        </authorList>
    </citation>
    <scope>INDUCTION</scope>
    <source>
        <strain>HK5</strain>
    </source>
</reference>
<reference key="7">
    <citation type="journal article" date="1999" name="Acta Crystallogr. D">
        <title>Crystallization and preliminary diffraction studies of two quinoprotein alcohol dehydrogenases (ADHs): a soluble monomeric ADH from Pseudomonas putida HK5 (ADH-IIB) and a heterotrimeric membrane-bound ADH from Gluconobacter suboxydans (ADH-GS).</title>
        <authorList>
            <person name="Chen Z."/>
            <person name="Baruch P."/>
            <person name="Mathews F.S."/>
            <person name="Matsushita K."/>
            <person name="Yamashita T."/>
            <person name="Toyama H."/>
            <person name="Adachi O."/>
        </authorList>
    </citation>
    <scope>CRYSTALLIZATION</scope>
    <scope>PRELIMINARY X-RAY CRYSTALLOGRAPHY (1.9 ANGSTROMS)</scope>
    <scope>COFACTOR</scope>
    <scope>SUBUNIT</scope>
    <source>
        <strain>HK5</strain>
    </source>
</reference>
<reference key="8">
    <citation type="journal article" date="2002" name="Structure">
        <title>Structure at 1.9 A resolution of a quinohemoprotein alcohol dehydrogenase from Pseudomonas putida HK5.</title>
        <authorList>
            <person name="Chen Z.W."/>
            <person name="Matsushita K."/>
            <person name="Yamashita T."/>
            <person name="Fujii T.A."/>
            <person name="Toyama H."/>
            <person name="Adachi O."/>
            <person name="Bellamy H.D."/>
            <person name="Mathews F.S."/>
        </authorList>
    </citation>
    <scope>X-RAY CRYSTALLOGRAPHY (1.90 ANGSTROMS) OF 23-690 IN COMPLEX WITH CALCIUM ION; HEME C AND PYRROLOQUINOLINE QUINONE</scope>
    <scope>PROTEIN SEQUENCE OF 23-36</scope>
    <scope>COFACTOR</scope>
    <scope>ACTIVE SITE</scope>
    <scope>DISULFIDE BOND</scope>
    <scope>SUBUNIT</scope>
    <source>
        <strain>HK5</strain>
    </source>
</reference>
<keyword id="KW-0002">3D-structure</keyword>
<keyword id="KW-0106">Calcium</keyword>
<keyword id="KW-0903">Direct protein sequencing</keyword>
<keyword id="KW-1015">Disulfide bond</keyword>
<keyword id="KW-0349">Heme</keyword>
<keyword id="KW-0408">Iron</keyword>
<keyword id="KW-0479">Metal-binding</keyword>
<keyword id="KW-0560">Oxidoreductase</keyword>
<keyword id="KW-0574">Periplasm</keyword>
<keyword id="KW-0634">PQQ</keyword>
<keyword id="KW-0732">Signal</keyword>
<comment type="function">
    <text evidence="2 6 7 9">Catalyzes the dye-linked oxidation of primary alcohols to the corresponding aldehydes and the (subsequent) oxidation of the aldehydes to carboxylic acids. Exhibits activity with longer mono-alcohols (C-4 to C-7) but not with methanol or glycerol. Reacts with 1,2-propanediol and 1,3-propanediol but not with sugar alcohols such as D-sorbitol.</text>
</comment>
<comment type="catalytic activity">
    <reaction evidence="2 6 9">
        <text>2 oxidized [azurin] + a primary alcohol = 2 reduced [azurin] + an aldehyde + 2 H(+)</text>
        <dbReference type="Rhea" id="RHEA:51148"/>
        <dbReference type="Rhea" id="RHEA-COMP:11034"/>
        <dbReference type="Rhea" id="RHEA-COMP:11035"/>
        <dbReference type="ChEBI" id="CHEBI:15378"/>
        <dbReference type="ChEBI" id="CHEBI:15734"/>
        <dbReference type="ChEBI" id="CHEBI:17478"/>
        <dbReference type="ChEBI" id="CHEBI:29036"/>
        <dbReference type="ChEBI" id="CHEBI:49552"/>
        <dbReference type="EC" id="1.1.9.1"/>
    </reaction>
</comment>
<comment type="cofactor">
    <cofactor evidence="3 4 9">
        <name>pyrroloquinoline quinone</name>
        <dbReference type="ChEBI" id="CHEBI:58442"/>
    </cofactor>
    <text evidence="3 4 9">Binds 1 PQQ group per subunit. PQQ is inserted between disulfide Cys-127-Cys-128 and the plane of Trp-254.</text>
</comment>
<comment type="cofactor">
    <cofactor evidence="3 4">
        <name>Ca(2+)</name>
        <dbReference type="ChEBI" id="CHEBI:29108"/>
    </cofactor>
    <text evidence="3 4">Binds 1 Ca(2+) ion per subunit.</text>
</comment>
<comment type="cofactor">
    <cofactor evidence="3 4 9">
        <name>heme c</name>
        <dbReference type="ChEBI" id="CHEBI:61717"/>
    </cofactor>
    <text evidence="3 4 9">Binds 1 heme c group per subunit.</text>
</comment>
<comment type="activity regulation">
    <text evidence="9">Inhibited by 10 mM 1-butanol.</text>
</comment>
<comment type="biophysicochemical properties">
    <kinetics>
        <KM evidence="2 6 9">5.61 mM for ethanol</KM>
        <KM evidence="2 6 9">0.105 mM for butane-1-ol</KM>
        <KM evidence="2 6 9">10.2 mM for propane-1,2-diol</KM>
        <KM evidence="2 6 9">3.71 mM for (S+)propane-1,2-diol</KM>
        <KM evidence="2 6 9">4.58 mM for (R-)propane-1,2-diol</KM>
        <KM evidence="2 6 9">0.015 mM for butane-1-ol</KM>
        <KM evidence="2 6 9">100 uM for azurin (from P.putida in the presence of 30 mM Tris-HCl pH 8.0)</KM>
        <KM evidence="2 6 9">51 uM for azurin (from P.putida in the presence of 30 mM Tris-HCl pH 8.0 and 0.1 M KCl)</KM>
        <KM evidence="2 6 9">25 uM for azurin (from P.putida in the presence of 30 mM Tris-HCl pH 8.0 and 0.5 M KCl)</KM>
        <KM evidence="2 6 9">202 uM for azurin (from P.aerugionosa in the presence of 30 mM Tris-HCl pH 8.0)</KM>
        <KM evidence="2 6 9">95 uM for potassium ferricyanide (in the presence of 30 mM Tris-HCl pH 8.0 and 0.1 M KCl)</KM>
        <Vmax evidence="2 6 9">15.4 umol/min/mg enzyme with ethanol as substrate</Vmax>
        <Vmax evidence="2 6 9">17.1 umol/min/mg enzyme with butane-1-ol as substrate</Vmax>
        <Vmax evidence="2 6 9">4.27 umol/min/mg enzyme with propane-1,2-diol as substrate</Vmax>
        <Vmax evidence="2 6 9">2.61 umol/min/mg enzyme with (S+)propane-1,2-diol as substrate</Vmax>
        <Vmax evidence="2 6 9">7.1 umol/min/mg enzyme with (R-)propane-1,2-diol as substrate</Vmax>
        <Vmax evidence="2 6 9">31.0 umol/min/mg enzyme with butane-1-ol as substrate</Vmax>
        <Vmax evidence="2 6 9">62.5 umol/min/mg enzyme toward azurin (from P.putida in the presence of 30 mM Tris-HCl pH 8.0)</Vmax>
        <Vmax evidence="2 6 9">52.6 umol/min/mg enzyme toward azurin (from P.putida in the presence of 30 mM Tris-HCl pH 8.0 and 0.1 M KCl)</Vmax>
        <Vmax evidence="2 6 9">41.7 umol/min/mg enzyme toward azurin (from P.putida in the presence of 30 mM Tris-HCl pH 8.0 and 0.1 M KCl)</Vmax>
        <Vmax evidence="2 6 9">22.3 umol/min/mg enzyme toward azurin (from P.aeruginosa in the presence of 30 mM Tris-HCl pH 8.0)</Vmax>
        <Vmax evidence="2 6 9">45.5 umol/min/mg enzyme toward potassium ferricyanide (in the presence of 30 mM Tris-HCl pH 8.0)</Vmax>
    </kinetics>
    <phDependence>
        <text evidence="2 6 9">Optimum pH is 8.0.</text>
    </phDependence>
    <redoxPotential>
        <text evidence="2 6 9">E(0) is +185 mV for heme c at pH 7.0, +188 mV for heme c at pH 8.0, +172 mV for heme c at pH 8.0 and 0.3 M KCl and +189 mV for ADH IIB-Azurin complex.</text>
    </redoxPotential>
</comment>
<comment type="subunit">
    <text evidence="3 4 9">Monomer.</text>
</comment>
<comment type="subcellular location">
    <subcellularLocation>
        <location evidence="11">Periplasm</location>
    </subcellularLocation>
</comment>
<comment type="induction">
    <text evidence="7 8 9">By 1-butanol. Primary and secondary C3,C4 alcohols as well as butyraldehyde.</text>
</comment>
<comment type="mass spectrometry">
    <text>The measured mass is that of QbdA with a single heme bound.</text>
</comment>
<comment type="similarity">
    <text evidence="11">Belongs to the bacterial PQQ dehydrogenase family.</text>
</comment>
<dbReference type="EC" id="1.1.9.1" evidence="2 6 9"/>
<dbReference type="EMBL" id="AB091400">
    <property type="protein sequence ID" value="BAC15559.1"/>
    <property type="molecule type" value="Genomic_DNA"/>
</dbReference>
<dbReference type="RefSeq" id="WP_058541185.1">
    <property type="nucleotide sequence ID" value="NZ_LKGZ01000023.1"/>
</dbReference>
<dbReference type="PDB" id="1KV9">
    <property type="method" value="X-ray"/>
    <property type="resolution" value="1.90 A"/>
    <property type="chains" value="A=23-690"/>
</dbReference>
<dbReference type="PDBsum" id="1KV9"/>
<dbReference type="SMR" id="Q8GR64"/>
<dbReference type="DrugBank" id="DB03205">
    <property type="generic name" value="Pyrroloquinoline Quinone"/>
</dbReference>
<dbReference type="KEGG" id="ag:BAC15559"/>
<dbReference type="BRENDA" id="1.1.9.1">
    <property type="organism ID" value="5092"/>
</dbReference>
<dbReference type="BRENDA" id="1.2.5.2">
    <property type="organism ID" value="5092"/>
</dbReference>
<dbReference type="SABIO-RK" id="Q8GR64"/>
<dbReference type="EvolutionaryTrace" id="Q8GR64"/>
<dbReference type="GO" id="GO:0016020">
    <property type="term" value="C:membrane"/>
    <property type="evidence" value="ECO:0007669"/>
    <property type="project" value="InterPro"/>
</dbReference>
<dbReference type="GO" id="GO:0030288">
    <property type="term" value="C:outer membrane-bounded periplasmic space"/>
    <property type="evidence" value="ECO:0007669"/>
    <property type="project" value="InterPro"/>
</dbReference>
<dbReference type="GO" id="GO:0005509">
    <property type="term" value="F:calcium ion binding"/>
    <property type="evidence" value="ECO:0000314"/>
    <property type="project" value="UniProtKB"/>
</dbReference>
<dbReference type="GO" id="GO:0009055">
    <property type="term" value="F:electron transfer activity"/>
    <property type="evidence" value="ECO:0000314"/>
    <property type="project" value="UniProtKB"/>
</dbReference>
<dbReference type="GO" id="GO:0020037">
    <property type="term" value="F:heme binding"/>
    <property type="evidence" value="ECO:0000314"/>
    <property type="project" value="UniProtKB"/>
</dbReference>
<dbReference type="GO" id="GO:0046872">
    <property type="term" value="F:metal ion binding"/>
    <property type="evidence" value="ECO:0000314"/>
    <property type="project" value="UniProtKB"/>
</dbReference>
<dbReference type="GO" id="GO:0016491">
    <property type="term" value="F:oxidoreductase activity"/>
    <property type="evidence" value="ECO:0000314"/>
    <property type="project" value="UniProtKB"/>
</dbReference>
<dbReference type="GO" id="GO:0016614">
    <property type="term" value="F:oxidoreductase activity, acting on CH-OH group of donors"/>
    <property type="evidence" value="ECO:0007669"/>
    <property type="project" value="InterPro"/>
</dbReference>
<dbReference type="GO" id="GO:0070968">
    <property type="term" value="F:pyrroloquinoline quinone binding"/>
    <property type="evidence" value="ECO:0000314"/>
    <property type="project" value="UniProtKB"/>
</dbReference>
<dbReference type="CDD" id="cd10279">
    <property type="entry name" value="PQQ_ADH_II"/>
    <property type="match status" value="1"/>
</dbReference>
<dbReference type="FunFam" id="2.140.10.10:FF:000003">
    <property type="entry name" value="Methanol dehydrogenase, large subunit"/>
    <property type="match status" value="1"/>
</dbReference>
<dbReference type="Gene3D" id="1.10.760.10">
    <property type="entry name" value="Cytochrome c-like domain"/>
    <property type="match status" value="1"/>
</dbReference>
<dbReference type="Gene3D" id="2.140.10.10">
    <property type="entry name" value="Quinoprotein alcohol dehydrogenase-like superfamily"/>
    <property type="match status" value="1"/>
</dbReference>
<dbReference type="InterPro" id="IPR009056">
    <property type="entry name" value="Cyt_c-like_dom"/>
</dbReference>
<dbReference type="InterPro" id="IPR036909">
    <property type="entry name" value="Cyt_c-like_dom_sf"/>
</dbReference>
<dbReference type="InterPro" id="IPR018391">
    <property type="entry name" value="PQQ_b-propeller_rpt"/>
</dbReference>
<dbReference type="InterPro" id="IPR017512">
    <property type="entry name" value="PQQ_MeOH/EtOH_DH"/>
</dbReference>
<dbReference type="InterPro" id="IPR002372">
    <property type="entry name" value="PQQ_rpt_dom"/>
</dbReference>
<dbReference type="InterPro" id="IPR011047">
    <property type="entry name" value="Quinoprotein_ADH-like_sf"/>
</dbReference>
<dbReference type="InterPro" id="IPR001479">
    <property type="entry name" value="Quinoprotein_DH_CS"/>
</dbReference>
<dbReference type="NCBIfam" id="TIGR03075">
    <property type="entry name" value="PQQ_enz_alc_DH"/>
    <property type="match status" value="1"/>
</dbReference>
<dbReference type="PANTHER" id="PTHR32303">
    <property type="entry name" value="QUINOPROTEIN ALCOHOL DEHYDROGENASE (CYTOCHROME C)"/>
    <property type="match status" value="1"/>
</dbReference>
<dbReference type="Pfam" id="PF13442">
    <property type="entry name" value="Cytochrome_CBB3"/>
    <property type="match status" value="1"/>
</dbReference>
<dbReference type="Pfam" id="PF01011">
    <property type="entry name" value="PQQ"/>
    <property type="match status" value="2"/>
</dbReference>
<dbReference type="SMART" id="SM00564">
    <property type="entry name" value="PQQ"/>
    <property type="match status" value="5"/>
</dbReference>
<dbReference type="SUPFAM" id="SSF46626">
    <property type="entry name" value="Cytochrome c"/>
    <property type="match status" value="1"/>
</dbReference>
<dbReference type="SUPFAM" id="SSF50998">
    <property type="entry name" value="Quinoprotein alcohol dehydrogenase-like"/>
    <property type="match status" value="1"/>
</dbReference>
<dbReference type="PROSITE" id="PS00364">
    <property type="entry name" value="BACTERIAL_PQQ_2"/>
    <property type="match status" value="1"/>
</dbReference>
<dbReference type="PROSITE" id="PS51007">
    <property type="entry name" value="CYTC"/>
    <property type="match status" value="1"/>
</dbReference>
<proteinExistence type="evidence at protein level"/>
<name>QHED_PSEPU</name>
<gene>
    <name evidence="10" type="primary">qbdA</name>
</gene>